<keyword id="KW-0143">Chaperone</keyword>
<keyword id="KW-0963">Cytoplasm</keyword>
<keyword id="KW-1185">Reference proteome</keyword>
<keyword id="KW-0346">Stress response</keyword>
<accession>A1STE3</accession>
<evidence type="ECO:0000255" key="1">
    <source>
        <dbReference type="HAMAP-Rule" id="MF_01151"/>
    </source>
</evidence>
<gene>
    <name evidence="1" type="primary">grpE</name>
    <name type="ordered locus">Ping_0916</name>
</gene>
<name>GRPE_PSYIN</name>
<reference key="1">
    <citation type="journal article" date="2008" name="BMC Genomics">
        <title>Genomics of an extreme psychrophile, Psychromonas ingrahamii.</title>
        <authorList>
            <person name="Riley M."/>
            <person name="Staley J.T."/>
            <person name="Danchin A."/>
            <person name="Wang T.Z."/>
            <person name="Brettin T.S."/>
            <person name="Hauser L.J."/>
            <person name="Land M.L."/>
            <person name="Thompson L.S."/>
        </authorList>
    </citation>
    <scope>NUCLEOTIDE SEQUENCE [LARGE SCALE GENOMIC DNA]</scope>
    <source>
        <strain>DSM 17664 / CCUG 51855 / 37</strain>
    </source>
</reference>
<feature type="chain" id="PRO_1000053629" description="Protein GrpE">
    <location>
        <begin position="1"/>
        <end position="206"/>
    </location>
</feature>
<comment type="function">
    <text evidence="1">Participates actively in the response to hyperosmotic and heat shock by preventing the aggregation of stress-denatured proteins, in association with DnaK and GrpE. It is the nucleotide exchange factor for DnaK and may function as a thermosensor. Unfolded proteins bind initially to DnaJ; upon interaction with the DnaJ-bound protein, DnaK hydrolyzes its bound ATP, resulting in the formation of a stable complex. GrpE releases ADP from DnaK; ATP binding to DnaK triggers the release of the substrate protein, thus completing the reaction cycle. Several rounds of ATP-dependent interactions between DnaJ, DnaK and GrpE are required for fully efficient folding.</text>
</comment>
<comment type="subunit">
    <text evidence="1">Homodimer.</text>
</comment>
<comment type="subcellular location">
    <subcellularLocation>
        <location evidence="1">Cytoplasm</location>
    </subcellularLocation>
</comment>
<comment type="similarity">
    <text evidence="1">Belongs to the GrpE family.</text>
</comment>
<dbReference type="EMBL" id="CP000510">
    <property type="protein sequence ID" value="ABM02758.1"/>
    <property type="molecule type" value="Genomic_DNA"/>
</dbReference>
<dbReference type="RefSeq" id="WP_011769321.1">
    <property type="nucleotide sequence ID" value="NC_008709.1"/>
</dbReference>
<dbReference type="SMR" id="A1STE3"/>
<dbReference type="STRING" id="357804.Ping_0916"/>
<dbReference type="KEGG" id="pin:Ping_0916"/>
<dbReference type="eggNOG" id="COG0576">
    <property type="taxonomic scope" value="Bacteria"/>
</dbReference>
<dbReference type="HOGENOM" id="CLU_057217_6_0_6"/>
<dbReference type="OrthoDB" id="9789811at2"/>
<dbReference type="Proteomes" id="UP000000639">
    <property type="component" value="Chromosome"/>
</dbReference>
<dbReference type="GO" id="GO:0005829">
    <property type="term" value="C:cytosol"/>
    <property type="evidence" value="ECO:0007669"/>
    <property type="project" value="TreeGrafter"/>
</dbReference>
<dbReference type="GO" id="GO:0000774">
    <property type="term" value="F:adenyl-nucleotide exchange factor activity"/>
    <property type="evidence" value="ECO:0007669"/>
    <property type="project" value="InterPro"/>
</dbReference>
<dbReference type="GO" id="GO:0042803">
    <property type="term" value="F:protein homodimerization activity"/>
    <property type="evidence" value="ECO:0007669"/>
    <property type="project" value="InterPro"/>
</dbReference>
<dbReference type="GO" id="GO:0051087">
    <property type="term" value="F:protein-folding chaperone binding"/>
    <property type="evidence" value="ECO:0007669"/>
    <property type="project" value="InterPro"/>
</dbReference>
<dbReference type="GO" id="GO:0051082">
    <property type="term" value="F:unfolded protein binding"/>
    <property type="evidence" value="ECO:0007669"/>
    <property type="project" value="TreeGrafter"/>
</dbReference>
<dbReference type="GO" id="GO:0006457">
    <property type="term" value="P:protein folding"/>
    <property type="evidence" value="ECO:0007669"/>
    <property type="project" value="InterPro"/>
</dbReference>
<dbReference type="CDD" id="cd00446">
    <property type="entry name" value="GrpE"/>
    <property type="match status" value="1"/>
</dbReference>
<dbReference type="FunFam" id="2.30.22.10:FF:000001">
    <property type="entry name" value="Protein GrpE"/>
    <property type="match status" value="1"/>
</dbReference>
<dbReference type="Gene3D" id="3.90.20.20">
    <property type="match status" value="1"/>
</dbReference>
<dbReference type="Gene3D" id="2.30.22.10">
    <property type="entry name" value="Head domain of nucleotide exchange factor GrpE"/>
    <property type="match status" value="1"/>
</dbReference>
<dbReference type="HAMAP" id="MF_01151">
    <property type="entry name" value="GrpE"/>
    <property type="match status" value="1"/>
</dbReference>
<dbReference type="InterPro" id="IPR000740">
    <property type="entry name" value="GrpE"/>
</dbReference>
<dbReference type="InterPro" id="IPR013805">
    <property type="entry name" value="GrpE_coiled_coil"/>
</dbReference>
<dbReference type="InterPro" id="IPR009012">
    <property type="entry name" value="GrpE_head"/>
</dbReference>
<dbReference type="NCBIfam" id="NF010748">
    <property type="entry name" value="PRK14150.1"/>
    <property type="match status" value="1"/>
</dbReference>
<dbReference type="PANTHER" id="PTHR21237">
    <property type="entry name" value="GRPE PROTEIN"/>
    <property type="match status" value="1"/>
</dbReference>
<dbReference type="PANTHER" id="PTHR21237:SF23">
    <property type="entry name" value="GRPE PROTEIN HOMOLOG, MITOCHONDRIAL"/>
    <property type="match status" value="1"/>
</dbReference>
<dbReference type="Pfam" id="PF01025">
    <property type="entry name" value="GrpE"/>
    <property type="match status" value="1"/>
</dbReference>
<dbReference type="PRINTS" id="PR00773">
    <property type="entry name" value="GRPEPROTEIN"/>
</dbReference>
<dbReference type="SUPFAM" id="SSF58014">
    <property type="entry name" value="Coiled-coil domain of nucleotide exchange factor GrpE"/>
    <property type="match status" value="1"/>
</dbReference>
<dbReference type="SUPFAM" id="SSF51064">
    <property type="entry name" value="Head domain of nucleotide exchange factor GrpE"/>
    <property type="match status" value="1"/>
</dbReference>
<dbReference type="PROSITE" id="PS01071">
    <property type="entry name" value="GRPE"/>
    <property type="match status" value="1"/>
</dbReference>
<proteinExistence type="inferred from homology"/>
<organism>
    <name type="scientific">Psychromonas ingrahamii (strain DSM 17664 / CCUG 51855 / 37)</name>
    <dbReference type="NCBI Taxonomy" id="357804"/>
    <lineage>
        <taxon>Bacteria</taxon>
        <taxon>Pseudomonadati</taxon>
        <taxon>Pseudomonadota</taxon>
        <taxon>Gammaproteobacteria</taxon>
        <taxon>Alteromonadales</taxon>
        <taxon>Psychromonadaceae</taxon>
        <taxon>Psychromonas</taxon>
    </lineage>
</organism>
<protein>
    <recommendedName>
        <fullName evidence="1">Protein GrpE</fullName>
    </recommendedName>
    <alternativeName>
        <fullName evidence="1">HSP-70 cofactor</fullName>
    </alternativeName>
</protein>
<sequence>MTEDKKTIPEEQVEAEQVVVEEVEAELVENDESAQPQEEAEASNEDLNMIEVLNKKLALAEQQIVDQQADVARAQADVVNARRIAAQDVQKAHKFALVKFADGLLPVIDSLEMAISHADKEDETLKPMIEGVELTLKSMLDTVDKFGLKVIDPKDEAFDPEKHQAMSMRAVPDVAPNQVIAVMQKGYELNGRVIRPAMVMVSKAED</sequence>